<reference key="1">
    <citation type="submission" date="2006-09" db="EMBL/GenBank/DDBJ databases">
        <authorList>
            <consortium name="NIH - Mammalian Gene Collection (MGC) project"/>
        </authorList>
    </citation>
    <scope>NUCLEOTIDE SEQUENCE [LARGE SCALE MRNA]</scope>
    <source>
        <strain>Hereford</strain>
        <tissue>Hippocampus</tissue>
    </source>
</reference>
<organism>
    <name type="scientific">Bos taurus</name>
    <name type="common">Bovine</name>
    <dbReference type="NCBI Taxonomy" id="9913"/>
    <lineage>
        <taxon>Eukaryota</taxon>
        <taxon>Metazoa</taxon>
        <taxon>Chordata</taxon>
        <taxon>Craniata</taxon>
        <taxon>Vertebrata</taxon>
        <taxon>Euteleostomi</taxon>
        <taxon>Mammalia</taxon>
        <taxon>Eutheria</taxon>
        <taxon>Laurasiatheria</taxon>
        <taxon>Artiodactyla</taxon>
        <taxon>Ruminantia</taxon>
        <taxon>Pecora</taxon>
        <taxon>Bovidae</taxon>
        <taxon>Bovinae</taxon>
        <taxon>Bos</taxon>
    </lineage>
</organism>
<comment type="function">
    <text evidence="1">Replication stress response protein that accumulates at DNA damage sites and promotes replication fork progression and integrity. Recruited to stalled replication forks via interaction with the RPA complex and directly stimulates ATR kinase activity independently of TOPBP1. Probably only regulates a subset of ATR targets.</text>
</comment>
<comment type="subunit">
    <text evidence="1">Interacts (via RBM1 motif) with RPA1. Interacts (via RBM2 motif) with RPA2. Interacts (via the ATR-activation domain motif) with ATR.</text>
</comment>
<comment type="subcellular location">
    <subcellularLocation>
        <location evidence="1">Nucleus</location>
    </subcellularLocation>
    <text evidence="1">Localizes at sites of DNA damage following replication stress. Recruited to stalled replication forks via interaction with RPA1 and RPA2 subunits of the RPA complex.</text>
</comment>
<comment type="domain">
    <text evidence="1">The RBM1 (RPA1-binding, also named RPA70N-binding) motif mediates interaction with RPA1. The RBM2 (RPA2-binding, also named RPA32C-binding) motif mediates interaction with RPA2.</text>
</comment>
<comment type="domain">
    <text evidence="1">The ATR-activation domain (AAD) motif is required to bind and activate ATR.</text>
</comment>
<comment type="PTM">
    <text evidence="1">Phosphorylated by ATR.</text>
</comment>
<gene>
    <name evidence="1" type="primary">ETAA1</name>
</gene>
<proteinExistence type="evidence at transcript level"/>
<name>ETAA1_BOVIN</name>
<dbReference type="EMBL" id="BC123739">
    <property type="protein sequence ID" value="AAI23740.1"/>
    <property type="molecule type" value="mRNA"/>
</dbReference>
<dbReference type="RefSeq" id="NP_001068596.1">
    <property type="nucleotide sequence ID" value="NM_001075128.1"/>
</dbReference>
<dbReference type="SMR" id="Q08DI1"/>
<dbReference type="FunCoup" id="Q08DI1">
    <property type="interactions" value="2783"/>
</dbReference>
<dbReference type="STRING" id="9913.ENSBTAP00000015577"/>
<dbReference type="PaxDb" id="9913-ENSBTAP00000015577"/>
<dbReference type="GeneID" id="282224"/>
<dbReference type="KEGG" id="bta:282224"/>
<dbReference type="CTD" id="54465"/>
<dbReference type="VEuPathDB" id="HostDB:ENSBTAG00000011727"/>
<dbReference type="eggNOG" id="ENOG502QTMP">
    <property type="taxonomic scope" value="Eukaryota"/>
</dbReference>
<dbReference type="HOGENOM" id="CLU_015351_0_0_1"/>
<dbReference type="InParanoid" id="Q08DI1"/>
<dbReference type="OMA" id="CITGSMS"/>
<dbReference type="OrthoDB" id="9378993at2759"/>
<dbReference type="TreeFam" id="TF333863"/>
<dbReference type="Proteomes" id="UP000009136">
    <property type="component" value="Chromosome 11"/>
</dbReference>
<dbReference type="Bgee" id="ENSBTAG00000011727">
    <property type="expression patterns" value="Expressed in spermatid and 111 other cell types or tissues"/>
</dbReference>
<dbReference type="GO" id="GO:0005829">
    <property type="term" value="C:cytosol"/>
    <property type="evidence" value="ECO:0007669"/>
    <property type="project" value="Ensembl"/>
</dbReference>
<dbReference type="GO" id="GO:0043596">
    <property type="term" value="C:nuclear replication fork"/>
    <property type="evidence" value="ECO:0000250"/>
    <property type="project" value="UniProtKB"/>
</dbReference>
<dbReference type="GO" id="GO:0016607">
    <property type="term" value="C:nuclear speck"/>
    <property type="evidence" value="ECO:0007669"/>
    <property type="project" value="Ensembl"/>
</dbReference>
<dbReference type="GO" id="GO:0005886">
    <property type="term" value="C:plasma membrane"/>
    <property type="evidence" value="ECO:0007669"/>
    <property type="project" value="Ensembl"/>
</dbReference>
<dbReference type="GO" id="GO:0043539">
    <property type="term" value="F:protein serine/threonine kinase activator activity"/>
    <property type="evidence" value="ECO:0000250"/>
    <property type="project" value="UniProtKB"/>
</dbReference>
<dbReference type="GO" id="GO:0006974">
    <property type="term" value="P:DNA damage response"/>
    <property type="evidence" value="ECO:0000250"/>
    <property type="project" value="UniProtKB"/>
</dbReference>
<dbReference type="GO" id="GO:0006281">
    <property type="term" value="P:DNA repair"/>
    <property type="evidence" value="ECO:0007669"/>
    <property type="project" value="UniProtKB-KW"/>
</dbReference>
<dbReference type="GO" id="GO:0044818">
    <property type="term" value="P:mitotic G2/M transition checkpoint"/>
    <property type="evidence" value="ECO:0007669"/>
    <property type="project" value="Ensembl"/>
</dbReference>
<dbReference type="GO" id="GO:0071902">
    <property type="term" value="P:positive regulation of protein serine/threonine kinase activity"/>
    <property type="evidence" value="ECO:0000250"/>
    <property type="project" value="UniProtKB"/>
</dbReference>
<dbReference type="GO" id="GO:2000001">
    <property type="term" value="P:regulation of DNA damage checkpoint"/>
    <property type="evidence" value="ECO:0000250"/>
    <property type="project" value="UniProtKB"/>
</dbReference>
<dbReference type="GO" id="GO:0031297">
    <property type="term" value="P:replication fork processing"/>
    <property type="evidence" value="ECO:0000250"/>
    <property type="project" value="UniProtKB"/>
</dbReference>
<dbReference type="InterPro" id="IPR029406">
    <property type="entry name" value="ETAA1"/>
</dbReference>
<dbReference type="PANTHER" id="PTHR16434:SF2">
    <property type="entry name" value="EWING'S TUMOR-ASSOCIATED ANTIGEN 1"/>
    <property type="match status" value="1"/>
</dbReference>
<dbReference type="PANTHER" id="PTHR16434">
    <property type="entry name" value="EWING'S TUMOR-ASSOCIATED ANTIGEN 1 ETAA1"/>
    <property type="match status" value="1"/>
</dbReference>
<dbReference type="Pfam" id="PF15350">
    <property type="entry name" value="ETAA1"/>
    <property type="match status" value="1"/>
</dbReference>
<protein>
    <recommendedName>
        <fullName evidence="1">Ewing's tumor-associated antigen 1 homolog</fullName>
    </recommendedName>
</protein>
<keyword id="KW-0175">Coiled coil</keyword>
<keyword id="KW-0227">DNA damage</keyword>
<keyword id="KW-0234">DNA repair</keyword>
<keyword id="KW-1017">Isopeptide bond</keyword>
<keyword id="KW-0539">Nucleus</keyword>
<keyword id="KW-0597">Phosphoprotein</keyword>
<keyword id="KW-1185">Reference proteome</keyword>
<keyword id="KW-0832">Ubl conjugation</keyword>
<feature type="chain" id="PRO_0000280098" description="Ewing's tumor-associated antigen 1 homolog">
    <location>
        <begin position="1"/>
        <end position="899"/>
    </location>
</feature>
<feature type="region of interest" description="Disordered" evidence="3">
    <location>
        <begin position="1"/>
        <end position="82"/>
    </location>
</feature>
<feature type="region of interest" description="Disordered" evidence="3">
    <location>
        <begin position="833"/>
        <end position="899"/>
    </location>
</feature>
<feature type="coiled-coil region" evidence="2">
    <location>
        <begin position="180"/>
        <end position="210"/>
    </location>
</feature>
<feature type="short sequence motif" description="ATR-activation domain (AAD)" evidence="1">
    <location>
        <begin position="105"/>
        <end position="111"/>
    </location>
</feature>
<feature type="short sequence motif" description="RBM1 motif" evidence="1">
    <location>
        <begin position="607"/>
        <end position="622"/>
    </location>
</feature>
<feature type="short sequence motif" description="RBM2 motif" evidence="1">
    <location>
        <begin position="868"/>
        <end position="890"/>
    </location>
</feature>
<feature type="compositionally biased region" description="Basic and acidic residues" evidence="3">
    <location>
        <begin position="71"/>
        <end position="81"/>
    </location>
</feature>
<feature type="compositionally biased region" description="Basic and acidic residues" evidence="3">
    <location>
        <begin position="859"/>
        <end position="877"/>
    </location>
</feature>
<feature type="modified residue" description="Phosphoserine" evidence="1">
    <location>
        <position position="467"/>
    </location>
</feature>
<feature type="modified residue" description="Phosphoserine" evidence="1">
    <location>
        <position position="810"/>
    </location>
</feature>
<feature type="cross-link" description="Glycyl lysine isopeptide (Lys-Gly) (interchain with G-Cter in SUMO2)" evidence="1">
    <location>
        <position position="416"/>
    </location>
</feature>
<feature type="cross-link" description="Glycyl lysine isopeptide (Lys-Gly) (interchain with G-Cter in SUMO2)" evidence="1">
    <location>
        <position position="444"/>
    </location>
</feature>
<feature type="cross-link" description="Glycyl lysine isopeptide (Lys-Gly) (interchain with G-Cter in SUMO2)" evidence="1">
    <location>
        <position position="485"/>
    </location>
</feature>
<feature type="cross-link" description="Glycyl lysine isopeptide (Lys-Gly) (interchain with G-Cter in SUMO2)" evidence="1">
    <location>
        <position position="539"/>
    </location>
</feature>
<sequence length="899" mass="99859">MSRRRKHGDSSGLKQTPRKAMATEEGSLVFESGKRRLRAARGSGPQGPGERPPRPLPQQEQPPVAASCRKSNTEERYETPKRMLQMDLLSSTFSSPNDPDGQNDIFWDQNSPMTKQLDKGRKKQLYTTDSDEISHIVNRIAPQDEKPTTDSMLGVWIGDTAIPCTPSVAKGKSRTKLSCTKLKSQNQEEELMKLAKQFDKNMEELDVIQEQDKRNHDLIQMISEAETSLNCRDNVQMQLLCDTVPEIDKALLKKPVKENTKISVVNDQTSSQKPFDQNAEAAFIAMFDGSTQKCSGQLSQDLSDSFLKTSNTTFGKKNTLKEEKIITNESVVTENLPSKTLGSLSHQVDNPGMTKSYVTFCTKEPGTFNKHIDTFTTSDFEDDWENLLSNEPFVMQNIETSELFPAPKTIQIADQKEMCSFNSKEAKSKSGMNKSVDVKLRDSKILQGLPSNTWNNELTDAEKYRFSPKPNDKPNKLSTTGNKMKLEKSFNIVVNQDKIQDCAVASNLTKVNEDTHTKFNCKVNASEKKSALKPGCSNKSIFNQSLKVPANVKPFGSATLGSTTSVCNPDQTNGSKLGSFFDDWNDPSFTNEIVKACHQLENSWEADDVDDDILYQACDDIERLTQEQNIRVDSKTSESVLEINNSSKHGAKNVFTTPKQGSQFMQSKHLNLNSISAQTSSLANSLQINKSVKMERGEMYGNSPGFLGATTNLSIYSKNSDCQISNLHVSCNNPDVPKQVNSSKSVLTGSSSLNVGSHHMSTEIAASKNRLSTLHLSKSTTRGKAQSDLNRAVRLSEYVFTKMKNCPMLSPFNNSSVTGSISDTKIAQGLEKNKTVNPLPGKAVQQQPLVKFSEPLKQPSKEEEEKNRKCSPEEIQRKRQAALIRRMAKAQASSVKKGR</sequence>
<evidence type="ECO:0000250" key="1">
    <source>
        <dbReference type="UniProtKB" id="Q9NY74"/>
    </source>
</evidence>
<evidence type="ECO:0000255" key="2"/>
<evidence type="ECO:0000256" key="3">
    <source>
        <dbReference type="SAM" id="MobiDB-lite"/>
    </source>
</evidence>
<accession>Q08DI1</accession>